<reference key="1">
    <citation type="journal article" date="2004" name="Proc. Natl. Acad. Sci. U.S.A.">
        <title>Comparison of the genome of the oral pathogen Treponema denticola with other spirochete genomes.</title>
        <authorList>
            <person name="Seshadri R."/>
            <person name="Myers G.S.A."/>
            <person name="Tettelin H."/>
            <person name="Eisen J.A."/>
            <person name="Heidelberg J.F."/>
            <person name="Dodson R.J."/>
            <person name="Davidsen T.M."/>
            <person name="DeBoy R.T."/>
            <person name="Fouts D.E."/>
            <person name="Haft D.H."/>
            <person name="Selengut J."/>
            <person name="Ren Q."/>
            <person name="Brinkac L.M."/>
            <person name="Madupu R."/>
            <person name="Kolonay J.F."/>
            <person name="Durkin S.A."/>
            <person name="Daugherty S.C."/>
            <person name="Shetty J."/>
            <person name="Shvartsbeyn A."/>
            <person name="Gebregeorgis E."/>
            <person name="Geer K."/>
            <person name="Tsegaye G."/>
            <person name="Malek J.A."/>
            <person name="Ayodeji B."/>
            <person name="Shatsman S."/>
            <person name="McLeod M.P."/>
            <person name="Smajs D."/>
            <person name="Howell J.K."/>
            <person name="Pal S."/>
            <person name="Amin A."/>
            <person name="Vashisth P."/>
            <person name="McNeill T.Z."/>
            <person name="Xiang Q."/>
            <person name="Sodergren E."/>
            <person name="Baca E."/>
            <person name="Weinstock G.M."/>
            <person name="Norris S.J."/>
            <person name="Fraser C.M."/>
            <person name="Paulsen I.T."/>
        </authorList>
    </citation>
    <scope>NUCLEOTIDE SEQUENCE [LARGE SCALE GENOMIC DNA]</scope>
    <source>
        <strain>ATCC 35405 / DSM 14222 / CIP 103919 / JCM 8153 / KCTC 15104</strain>
    </source>
</reference>
<gene>
    <name evidence="1" type="primary">truA</name>
    <name type="ordered locus">TDE_2275</name>
</gene>
<proteinExistence type="inferred from homology"/>
<organism>
    <name type="scientific">Treponema denticola (strain ATCC 35405 / DSM 14222 / CIP 103919 / JCM 8153 / KCTC 15104)</name>
    <dbReference type="NCBI Taxonomy" id="243275"/>
    <lineage>
        <taxon>Bacteria</taxon>
        <taxon>Pseudomonadati</taxon>
        <taxon>Spirochaetota</taxon>
        <taxon>Spirochaetia</taxon>
        <taxon>Spirochaetales</taxon>
        <taxon>Treponemataceae</taxon>
        <taxon>Treponema</taxon>
    </lineage>
</organism>
<dbReference type="EC" id="5.4.99.12" evidence="1"/>
<dbReference type="EMBL" id="AE017226">
    <property type="protein sequence ID" value="AAS12794.1"/>
    <property type="molecule type" value="Genomic_DNA"/>
</dbReference>
<dbReference type="RefSeq" id="NP_972875.1">
    <property type="nucleotide sequence ID" value="NC_002967.9"/>
</dbReference>
<dbReference type="RefSeq" id="WP_002667863.1">
    <property type="nucleotide sequence ID" value="NC_002967.9"/>
</dbReference>
<dbReference type="SMR" id="Q73KE3"/>
<dbReference type="STRING" id="243275.TDE_2275"/>
<dbReference type="PaxDb" id="243275-TDE_2275"/>
<dbReference type="GeneID" id="2740025"/>
<dbReference type="KEGG" id="tde:TDE_2275"/>
<dbReference type="PATRIC" id="fig|243275.7.peg.2146"/>
<dbReference type="eggNOG" id="COG0101">
    <property type="taxonomic scope" value="Bacteria"/>
</dbReference>
<dbReference type="HOGENOM" id="CLU_014673_0_1_12"/>
<dbReference type="OrthoDB" id="9811823at2"/>
<dbReference type="Proteomes" id="UP000008212">
    <property type="component" value="Chromosome"/>
</dbReference>
<dbReference type="GO" id="GO:0003723">
    <property type="term" value="F:RNA binding"/>
    <property type="evidence" value="ECO:0007669"/>
    <property type="project" value="InterPro"/>
</dbReference>
<dbReference type="GO" id="GO:0160147">
    <property type="term" value="F:tRNA pseudouridine(38-40) synthase activity"/>
    <property type="evidence" value="ECO:0007669"/>
    <property type="project" value="UniProtKB-EC"/>
</dbReference>
<dbReference type="GO" id="GO:0031119">
    <property type="term" value="P:tRNA pseudouridine synthesis"/>
    <property type="evidence" value="ECO:0007669"/>
    <property type="project" value="UniProtKB-UniRule"/>
</dbReference>
<dbReference type="CDD" id="cd02570">
    <property type="entry name" value="PseudoU_synth_EcTruA"/>
    <property type="match status" value="1"/>
</dbReference>
<dbReference type="FunFam" id="3.30.70.580:FF:000001">
    <property type="entry name" value="tRNA pseudouridine synthase A"/>
    <property type="match status" value="1"/>
</dbReference>
<dbReference type="Gene3D" id="3.30.70.660">
    <property type="entry name" value="Pseudouridine synthase I, catalytic domain, C-terminal subdomain"/>
    <property type="match status" value="1"/>
</dbReference>
<dbReference type="Gene3D" id="3.30.70.580">
    <property type="entry name" value="Pseudouridine synthase I, catalytic domain, N-terminal subdomain"/>
    <property type="match status" value="1"/>
</dbReference>
<dbReference type="HAMAP" id="MF_00171">
    <property type="entry name" value="TruA"/>
    <property type="match status" value="1"/>
</dbReference>
<dbReference type="InterPro" id="IPR020103">
    <property type="entry name" value="PsdUridine_synth_cat_dom_sf"/>
</dbReference>
<dbReference type="InterPro" id="IPR001406">
    <property type="entry name" value="PsdUridine_synth_TruA"/>
</dbReference>
<dbReference type="InterPro" id="IPR020097">
    <property type="entry name" value="PsdUridine_synth_TruA_a/b_dom"/>
</dbReference>
<dbReference type="InterPro" id="IPR020095">
    <property type="entry name" value="PsdUridine_synth_TruA_C"/>
</dbReference>
<dbReference type="InterPro" id="IPR020094">
    <property type="entry name" value="TruA/RsuA/RluB/E/F_N"/>
</dbReference>
<dbReference type="NCBIfam" id="TIGR00071">
    <property type="entry name" value="hisT_truA"/>
    <property type="match status" value="1"/>
</dbReference>
<dbReference type="PANTHER" id="PTHR11142">
    <property type="entry name" value="PSEUDOURIDYLATE SYNTHASE"/>
    <property type="match status" value="1"/>
</dbReference>
<dbReference type="PANTHER" id="PTHR11142:SF0">
    <property type="entry name" value="TRNA PSEUDOURIDINE SYNTHASE-LIKE 1"/>
    <property type="match status" value="1"/>
</dbReference>
<dbReference type="Pfam" id="PF01416">
    <property type="entry name" value="PseudoU_synth_1"/>
    <property type="match status" value="2"/>
</dbReference>
<dbReference type="PIRSF" id="PIRSF001430">
    <property type="entry name" value="tRNA_psdUrid_synth"/>
    <property type="match status" value="1"/>
</dbReference>
<dbReference type="SUPFAM" id="SSF55120">
    <property type="entry name" value="Pseudouridine synthase"/>
    <property type="match status" value="1"/>
</dbReference>
<sequence length="268" mass="30277">MEISQNQKNILLTISYDGTNFCGWQKQTKEGAETFRTVQGELEKALTKIHKHPIETNGSGRTDSGVHAARQAVNFFCDIKSMRASNFLPALNSILPKDIRVMDAAEVSPLLHARFNALSRTYRYKIKCGKTIFAHEQPYTWHIRRYPDIAALNEMASCLSGELDCTAFSAAGDQSISKSRYIKKAVFFIENDYLIFEICANAFLWKMVRSIVGTLLHLDEIGASKKDFKDILESKMREKAGPTAPPQGLFLWSIEYPEDLLKAPPETF</sequence>
<comment type="function">
    <text evidence="1">Formation of pseudouridine at positions 38, 39 and 40 in the anticodon stem and loop of transfer RNAs.</text>
</comment>
<comment type="catalytic activity">
    <reaction evidence="1">
        <text>uridine(38/39/40) in tRNA = pseudouridine(38/39/40) in tRNA</text>
        <dbReference type="Rhea" id="RHEA:22376"/>
        <dbReference type="Rhea" id="RHEA-COMP:10085"/>
        <dbReference type="Rhea" id="RHEA-COMP:10087"/>
        <dbReference type="ChEBI" id="CHEBI:65314"/>
        <dbReference type="ChEBI" id="CHEBI:65315"/>
        <dbReference type="EC" id="5.4.99.12"/>
    </reaction>
</comment>
<comment type="subunit">
    <text evidence="1">Homodimer.</text>
</comment>
<comment type="similarity">
    <text evidence="1">Belongs to the tRNA pseudouridine synthase TruA family.</text>
</comment>
<feature type="chain" id="PRO_0000057478" description="tRNA pseudouridine synthase A">
    <location>
        <begin position="1"/>
        <end position="268"/>
    </location>
</feature>
<feature type="active site" description="Nucleophile" evidence="1">
    <location>
        <position position="63"/>
    </location>
</feature>
<feature type="binding site" evidence="1">
    <location>
        <position position="122"/>
    </location>
    <ligand>
        <name>substrate</name>
    </ligand>
</feature>
<protein>
    <recommendedName>
        <fullName evidence="1">tRNA pseudouridine synthase A</fullName>
        <ecNumber evidence="1">5.4.99.12</ecNumber>
    </recommendedName>
    <alternativeName>
        <fullName evidence="1">tRNA pseudouridine(38-40) synthase</fullName>
    </alternativeName>
    <alternativeName>
        <fullName evidence="1">tRNA pseudouridylate synthase I</fullName>
    </alternativeName>
    <alternativeName>
        <fullName evidence="1">tRNA-uridine isomerase I</fullName>
    </alternativeName>
</protein>
<name>TRUA_TREDE</name>
<accession>Q73KE3</accession>
<evidence type="ECO:0000255" key="1">
    <source>
        <dbReference type="HAMAP-Rule" id="MF_00171"/>
    </source>
</evidence>
<keyword id="KW-0413">Isomerase</keyword>
<keyword id="KW-1185">Reference proteome</keyword>
<keyword id="KW-0819">tRNA processing</keyword>